<protein>
    <recommendedName>
        <fullName>Chromosome segregation in meiosis protein 2</fullName>
    </recommendedName>
</protein>
<evidence type="ECO:0000250" key="1"/>
<evidence type="ECO:0000305" key="2"/>
<proteinExistence type="inferred from homology"/>
<name>CSM2_EREGS</name>
<accession>Q755Z9</accession>
<feature type="chain" id="PRO_0000280682" description="Chromosome segregation in meiosis protein 2">
    <location>
        <begin position="1"/>
        <end position="211"/>
    </location>
</feature>
<reference key="1">
    <citation type="journal article" date="2004" name="Science">
        <title>The Ashbya gossypii genome as a tool for mapping the ancient Saccharomyces cerevisiae genome.</title>
        <authorList>
            <person name="Dietrich F.S."/>
            <person name="Voegeli S."/>
            <person name="Brachat S."/>
            <person name="Lerch A."/>
            <person name="Gates K."/>
            <person name="Steiner S."/>
            <person name="Mohr C."/>
            <person name="Poehlmann R."/>
            <person name="Luedi P."/>
            <person name="Choi S."/>
            <person name="Wing R.A."/>
            <person name="Flavier A."/>
            <person name="Gaffney T.D."/>
            <person name="Philippsen P."/>
        </authorList>
    </citation>
    <scope>NUCLEOTIDE SEQUENCE [LARGE SCALE GENOMIC DNA]</scope>
    <source>
        <strain>ATCC 10895 / CBS 109.51 / FGSC 9923 / NRRL Y-1056</strain>
    </source>
</reference>
<reference key="2">
    <citation type="journal article" date="2013" name="G3 (Bethesda)">
        <title>Genomes of Ashbya fungi isolated from insects reveal four mating-type loci, numerous translocations, lack of transposons, and distinct gene duplications.</title>
        <authorList>
            <person name="Dietrich F.S."/>
            <person name="Voegeli S."/>
            <person name="Kuo S."/>
            <person name="Philippsen P."/>
        </authorList>
    </citation>
    <scope>GENOME REANNOTATION</scope>
    <source>
        <strain>ATCC 10895 / CBS 109.51 / FGSC 9923 / NRRL Y-1056</strain>
    </source>
</reference>
<organism>
    <name type="scientific">Eremothecium gossypii (strain ATCC 10895 / CBS 109.51 / FGSC 9923 / NRRL Y-1056)</name>
    <name type="common">Yeast</name>
    <name type="synonym">Ashbya gossypii</name>
    <dbReference type="NCBI Taxonomy" id="284811"/>
    <lineage>
        <taxon>Eukaryota</taxon>
        <taxon>Fungi</taxon>
        <taxon>Dikarya</taxon>
        <taxon>Ascomycota</taxon>
        <taxon>Saccharomycotina</taxon>
        <taxon>Saccharomycetes</taxon>
        <taxon>Saccharomycetales</taxon>
        <taxon>Saccharomycetaceae</taxon>
        <taxon>Eremothecium</taxon>
    </lineage>
</organism>
<sequence length="211" mass="23538">MYIRVLEKLTDTALSAHLISIYRDYLPTQGTSLPKVVYIDCKNSFPIRTFHAHLATAPSALSVTSEQIMENVRVVVCLDLTELRKAIQTLSHSLAVERASSKETDPSSTSTTFVILCGLDAMYRATHLVDHLLAHQQLNDSLLRLRILAAEQESGALQTDILLPRAEFPRAASTLLYKEASNSTHPIKKPRSSWYGSGNMLGDYIIKFYTD</sequence>
<gene>
    <name type="primary">CSM2</name>
    <name type="ordered locus">AER368C</name>
</gene>
<comment type="function">
    <text evidence="1">Involved in chromosome segregation during meiosis. Promotes efficient recombinational repair and functions in the protection of the genome from spontaneous and induced DNA damage like mutations and gross chromosomal rearrangements (GCRs) (By similarity).</text>
</comment>
<comment type="subcellular location">
    <subcellularLocation>
        <location evidence="1">Cytoplasm</location>
    </subcellularLocation>
    <subcellularLocation>
        <location evidence="1">Nucleus</location>
    </subcellularLocation>
</comment>
<comment type="similarity">
    <text evidence="2">Belongs to the CSM2 family.</text>
</comment>
<keyword id="KW-0963">Cytoplasm</keyword>
<keyword id="KW-0227">DNA damage</keyword>
<keyword id="KW-0234">DNA repair</keyword>
<keyword id="KW-0469">Meiosis</keyword>
<keyword id="KW-0539">Nucleus</keyword>
<keyword id="KW-1185">Reference proteome</keyword>
<dbReference type="EMBL" id="AE016818">
    <property type="protein sequence ID" value="AAS53048.1"/>
    <property type="molecule type" value="Genomic_DNA"/>
</dbReference>
<dbReference type="RefSeq" id="NP_985224.1">
    <property type="nucleotide sequence ID" value="NM_210578.1"/>
</dbReference>
<dbReference type="SMR" id="Q755Z9"/>
<dbReference type="FunCoup" id="Q755Z9">
    <property type="interactions" value="27"/>
</dbReference>
<dbReference type="STRING" id="284811.Q755Z9"/>
<dbReference type="EnsemblFungi" id="AAS53048">
    <property type="protein sequence ID" value="AAS53048"/>
    <property type="gene ID" value="AGOS_AER368C"/>
</dbReference>
<dbReference type="GeneID" id="4621440"/>
<dbReference type="KEGG" id="ago:AGOS_AER368C"/>
<dbReference type="eggNOG" id="ENOG502S2QF">
    <property type="taxonomic scope" value="Eukaryota"/>
</dbReference>
<dbReference type="HOGENOM" id="CLU_1235013_0_0_1"/>
<dbReference type="InParanoid" id="Q755Z9"/>
<dbReference type="OMA" id="WDLITAW"/>
<dbReference type="OrthoDB" id="4067310at2759"/>
<dbReference type="Proteomes" id="UP000000591">
    <property type="component" value="Chromosome V"/>
</dbReference>
<dbReference type="GO" id="GO:0005737">
    <property type="term" value="C:cytoplasm"/>
    <property type="evidence" value="ECO:0007669"/>
    <property type="project" value="UniProtKB-SubCell"/>
</dbReference>
<dbReference type="GO" id="GO:0005634">
    <property type="term" value="C:nucleus"/>
    <property type="evidence" value="ECO:0007669"/>
    <property type="project" value="UniProtKB-SubCell"/>
</dbReference>
<dbReference type="GO" id="GO:0097196">
    <property type="term" value="C:Shu complex"/>
    <property type="evidence" value="ECO:0007669"/>
    <property type="project" value="InterPro"/>
</dbReference>
<dbReference type="GO" id="GO:0051321">
    <property type="term" value="P:meiotic cell cycle"/>
    <property type="evidence" value="ECO:0007669"/>
    <property type="project" value="UniProtKB-KW"/>
</dbReference>
<dbReference type="GO" id="GO:0000725">
    <property type="term" value="P:recombinational repair"/>
    <property type="evidence" value="ECO:0007669"/>
    <property type="project" value="InterPro"/>
</dbReference>
<dbReference type="Gene3D" id="3.40.50.300">
    <property type="entry name" value="P-loop containing nucleotide triphosphate hydrolases"/>
    <property type="match status" value="1"/>
</dbReference>
<dbReference type="InterPro" id="IPR031783">
    <property type="entry name" value="Csm2"/>
</dbReference>
<dbReference type="InterPro" id="IPR027417">
    <property type="entry name" value="P-loop_NTPase"/>
</dbReference>
<dbReference type="Pfam" id="PF16834">
    <property type="entry name" value="CSM2"/>
    <property type="match status" value="1"/>
</dbReference>